<proteinExistence type="inferred from homology"/>
<reference key="1">
    <citation type="submission" date="2008-02" db="EMBL/GenBank/DDBJ databases">
        <title>Complete sequence of Yersinia pseudotuberculosis YPIII.</title>
        <authorList>
            <consortium name="US DOE Joint Genome Institute"/>
            <person name="Copeland A."/>
            <person name="Lucas S."/>
            <person name="Lapidus A."/>
            <person name="Glavina del Rio T."/>
            <person name="Dalin E."/>
            <person name="Tice H."/>
            <person name="Bruce D."/>
            <person name="Goodwin L."/>
            <person name="Pitluck S."/>
            <person name="Munk A.C."/>
            <person name="Brettin T."/>
            <person name="Detter J.C."/>
            <person name="Han C."/>
            <person name="Tapia R."/>
            <person name="Schmutz J."/>
            <person name="Larimer F."/>
            <person name="Land M."/>
            <person name="Hauser L."/>
            <person name="Challacombe J.F."/>
            <person name="Green L."/>
            <person name="Lindler L.E."/>
            <person name="Nikolich M.P."/>
            <person name="Richardson P."/>
        </authorList>
    </citation>
    <scope>NUCLEOTIDE SEQUENCE [LARGE SCALE GENOMIC DNA]</scope>
    <source>
        <strain>YPIII</strain>
    </source>
</reference>
<feature type="chain" id="PRO_1000145710" description="Cation-efflux pump FieF">
    <location>
        <begin position="1"/>
        <end position="300"/>
    </location>
</feature>
<feature type="transmembrane region" description="Helical" evidence="1">
    <location>
        <begin position="12"/>
        <end position="32"/>
    </location>
</feature>
<feature type="transmembrane region" description="Helical" evidence="1">
    <location>
        <begin position="40"/>
        <end position="60"/>
    </location>
</feature>
<feature type="transmembrane region" description="Helical" evidence="1">
    <location>
        <begin position="82"/>
        <end position="102"/>
    </location>
</feature>
<feature type="transmembrane region" description="Helical" evidence="1">
    <location>
        <begin position="114"/>
        <end position="134"/>
    </location>
</feature>
<feature type="transmembrane region" description="Helical" evidence="1">
    <location>
        <begin position="155"/>
        <end position="175"/>
    </location>
</feature>
<feature type="transmembrane region" description="Helical" evidence="1">
    <location>
        <begin position="178"/>
        <end position="198"/>
    </location>
</feature>
<feature type="binding site" evidence="1">
    <location>
        <position position="45"/>
    </location>
    <ligand>
        <name>Zn(2+)</name>
        <dbReference type="ChEBI" id="CHEBI:29105"/>
    </ligand>
</feature>
<feature type="binding site" evidence="1">
    <location>
        <position position="49"/>
    </location>
    <ligand>
        <name>Zn(2+)</name>
        <dbReference type="ChEBI" id="CHEBI:29105"/>
    </ligand>
</feature>
<feature type="binding site" evidence="1">
    <location>
        <position position="153"/>
    </location>
    <ligand>
        <name>Zn(2+)</name>
        <dbReference type="ChEBI" id="CHEBI:29105"/>
    </ligand>
</feature>
<feature type="binding site" evidence="1">
    <location>
        <position position="157"/>
    </location>
    <ligand>
        <name>Zn(2+)</name>
        <dbReference type="ChEBI" id="CHEBI:29105"/>
    </ligand>
</feature>
<keyword id="KW-0997">Cell inner membrane</keyword>
<keyword id="KW-1003">Cell membrane</keyword>
<keyword id="KW-0406">Ion transport</keyword>
<keyword id="KW-0408">Iron</keyword>
<keyword id="KW-0410">Iron transport</keyword>
<keyword id="KW-0472">Membrane</keyword>
<keyword id="KW-0479">Metal-binding</keyword>
<keyword id="KW-0812">Transmembrane</keyword>
<keyword id="KW-1133">Transmembrane helix</keyword>
<keyword id="KW-0813">Transport</keyword>
<keyword id="KW-0862">Zinc</keyword>
<keyword id="KW-0864">Zinc transport</keyword>
<dbReference type="EMBL" id="CP000950">
    <property type="protein sequence ID" value="ACA70386.1"/>
    <property type="molecule type" value="Genomic_DNA"/>
</dbReference>
<dbReference type="RefSeq" id="WP_002208967.1">
    <property type="nucleotide sequence ID" value="NZ_CP009792.1"/>
</dbReference>
<dbReference type="SMR" id="B1JQU5"/>
<dbReference type="GeneID" id="57974515"/>
<dbReference type="KEGG" id="ypy:YPK_4127"/>
<dbReference type="PATRIC" id="fig|502800.11.peg.477"/>
<dbReference type="GO" id="GO:0005886">
    <property type="term" value="C:plasma membrane"/>
    <property type="evidence" value="ECO:0007669"/>
    <property type="project" value="UniProtKB-SubCell"/>
</dbReference>
<dbReference type="GO" id="GO:0015086">
    <property type="term" value="F:cadmium ion transmembrane transporter activity"/>
    <property type="evidence" value="ECO:0007669"/>
    <property type="project" value="UniProtKB-UniRule"/>
</dbReference>
<dbReference type="GO" id="GO:0015093">
    <property type="term" value="F:ferrous iron transmembrane transporter activity"/>
    <property type="evidence" value="ECO:0007669"/>
    <property type="project" value="TreeGrafter"/>
</dbReference>
<dbReference type="GO" id="GO:0046872">
    <property type="term" value="F:metal ion binding"/>
    <property type="evidence" value="ECO:0007669"/>
    <property type="project" value="UniProtKB-KW"/>
</dbReference>
<dbReference type="GO" id="GO:0015341">
    <property type="term" value="F:zinc efflux antiporter activity"/>
    <property type="evidence" value="ECO:0007669"/>
    <property type="project" value="TreeGrafter"/>
</dbReference>
<dbReference type="GO" id="GO:0006882">
    <property type="term" value="P:intracellular zinc ion homeostasis"/>
    <property type="evidence" value="ECO:0007669"/>
    <property type="project" value="TreeGrafter"/>
</dbReference>
<dbReference type="FunFam" id="1.20.1510.10:FF:000001">
    <property type="entry name" value="Ferrous-iron efflux pump FieF"/>
    <property type="match status" value="1"/>
</dbReference>
<dbReference type="FunFam" id="3.30.70.1350:FF:000002">
    <property type="entry name" value="Ferrous-iron efflux pump FieF"/>
    <property type="match status" value="1"/>
</dbReference>
<dbReference type="Gene3D" id="1.20.1510.10">
    <property type="entry name" value="Cation efflux protein transmembrane domain"/>
    <property type="match status" value="1"/>
</dbReference>
<dbReference type="Gene3D" id="3.30.70.1350">
    <property type="entry name" value="Cation efflux protein, cytoplasmic domain"/>
    <property type="match status" value="1"/>
</dbReference>
<dbReference type="HAMAP" id="MF_01425">
    <property type="entry name" value="Cation_efflux_FieF"/>
    <property type="match status" value="1"/>
</dbReference>
<dbReference type="InterPro" id="IPR002524">
    <property type="entry name" value="Cation_efflux"/>
</dbReference>
<dbReference type="InterPro" id="IPR027470">
    <property type="entry name" value="Cation_efflux_CTD"/>
</dbReference>
<dbReference type="InterPro" id="IPR036837">
    <property type="entry name" value="Cation_efflux_CTD_sf"/>
</dbReference>
<dbReference type="InterPro" id="IPR023783">
    <property type="entry name" value="Cation_efflux_FieF"/>
</dbReference>
<dbReference type="InterPro" id="IPR027469">
    <property type="entry name" value="Cation_efflux_TMD_sf"/>
</dbReference>
<dbReference type="InterPro" id="IPR050291">
    <property type="entry name" value="CDF_Transporter"/>
</dbReference>
<dbReference type="NCBIfam" id="TIGR01297">
    <property type="entry name" value="CDF"/>
    <property type="match status" value="1"/>
</dbReference>
<dbReference type="NCBIfam" id="NF007064">
    <property type="entry name" value="PRK09509.1"/>
    <property type="match status" value="1"/>
</dbReference>
<dbReference type="PANTHER" id="PTHR43840:SF41">
    <property type="entry name" value="CATION-EFFLUX PUMP FIEF"/>
    <property type="match status" value="1"/>
</dbReference>
<dbReference type="PANTHER" id="PTHR43840">
    <property type="entry name" value="MITOCHONDRIAL METAL TRANSPORTER 1-RELATED"/>
    <property type="match status" value="1"/>
</dbReference>
<dbReference type="Pfam" id="PF01545">
    <property type="entry name" value="Cation_efflux"/>
    <property type="match status" value="1"/>
</dbReference>
<dbReference type="Pfam" id="PF16916">
    <property type="entry name" value="ZT_dimer"/>
    <property type="match status" value="1"/>
</dbReference>
<dbReference type="SUPFAM" id="SSF160240">
    <property type="entry name" value="Cation efflux protein cytoplasmic domain-like"/>
    <property type="match status" value="1"/>
</dbReference>
<dbReference type="SUPFAM" id="SSF161111">
    <property type="entry name" value="Cation efflux protein transmembrane domain-like"/>
    <property type="match status" value="1"/>
</dbReference>
<evidence type="ECO:0000255" key="1">
    <source>
        <dbReference type="HAMAP-Rule" id="MF_01425"/>
    </source>
</evidence>
<protein>
    <recommendedName>
        <fullName evidence="1">Cation-efflux pump FieF</fullName>
    </recommendedName>
</protein>
<gene>
    <name evidence="1" type="primary">fieF</name>
    <name type="ordered locus">YPK_4127</name>
</gene>
<accession>B1JQU5</accession>
<sequence>MDPQYARWVKAAALSATALASILLIIKIFAWWHTGSVSLLAALVDSLVDLAASLTNLFVVRYSLQPADEEHTFGHGKAESLAALAQSMFISGSALFLFLTGFRHLASPEPLQDPSIGIGVTLVALFSTLILVTFQRWVVRKTHSQAIRADMLHYQSDVLMNGAILIALALSWYGFRRADALFALGIGVYILYSALRMGYEAVQSLLDRALPDDERQQIIDIVTSWPGVIGAHDLRTRRSGQTRFIQLHLEMEDMMPLMEAHVLAEQVEHALLYRFPGADVLIHQDPCSVVPKERHAHWEL</sequence>
<organism>
    <name type="scientific">Yersinia pseudotuberculosis serotype O:3 (strain YPIII)</name>
    <dbReference type="NCBI Taxonomy" id="502800"/>
    <lineage>
        <taxon>Bacteria</taxon>
        <taxon>Pseudomonadati</taxon>
        <taxon>Pseudomonadota</taxon>
        <taxon>Gammaproteobacteria</taxon>
        <taxon>Enterobacterales</taxon>
        <taxon>Yersiniaceae</taxon>
        <taxon>Yersinia</taxon>
    </lineage>
</organism>
<name>FIEF_YERPY</name>
<comment type="function">
    <text evidence="1">Divalent metal cation transporter which exports Zn(2+), Cd(2+) and possibly Fe(2+). May be involved in zinc and iron detoxification by efflux.</text>
</comment>
<comment type="catalytic activity">
    <reaction evidence="1">
        <text>Zn(2+)(in) + H(+)(out) = Zn(2+)(out) + H(+)(in)</text>
        <dbReference type="Rhea" id="RHEA:28839"/>
        <dbReference type="ChEBI" id="CHEBI:15378"/>
        <dbReference type="ChEBI" id="CHEBI:29105"/>
    </reaction>
</comment>
<comment type="catalytic activity">
    <reaction evidence="1">
        <text>Cd(2+)(in) + H(+)(out) = Cd(2+)(out) + H(+)(in)</text>
        <dbReference type="Rhea" id="RHEA:28739"/>
        <dbReference type="ChEBI" id="CHEBI:15378"/>
        <dbReference type="ChEBI" id="CHEBI:48775"/>
    </reaction>
</comment>
<comment type="catalytic activity">
    <reaction evidence="1">
        <text>Fe(2+)(in) + H(+)(out) = Fe(2+)(out) + H(+)(in)</text>
        <dbReference type="Rhea" id="RHEA:29439"/>
        <dbReference type="ChEBI" id="CHEBI:15378"/>
        <dbReference type="ChEBI" id="CHEBI:29033"/>
    </reaction>
</comment>
<comment type="subunit">
    <text evidence="1">Homodimer.</text>
</comment>
<comment type="subcellular location">
    <subcellularLocation>
        <location evidence="1">Cell inner membrane</location>
        <topology evidence="1">Multi-pass membrane protein</topology>
    </subcellularLocation>
</comment>
<comment type="similarity">
    <text evidence="1">Belongs to the cation diffusion facilitator (CDF) transporter (TC 2.A.4) family. FieF subfamily.</text>
</comment>